<protein>
    <recommendedName>
        <fullName evidence="2">D-alanine--D-alanine ligase A</fullName>
        <ecNumber evidence="2">6.3.2.4</ecNumber>
    </recommendedName>
    <alternativeName>
        <fullName evidence="2">D-Ala-D-Ala ligase A</fullName>
    </alternativeName>
    <alternativeName>
        <fullName evidence="2">D-alanylalanine synthetase A</fullName>
    </alternativeName>
</protein>
<reference key="1">
    <citation type="journal article" date="2002" name="Proc. Natl. Acad. Sci. U.S.A.">
        <title>The Brucella suis genome reveals fundamental similarities between animal and plant pathogens and symbionts.</title>
        <authorList>
            <person name="Paulsen I.T."/>
            <person name="Seshadri R."/>
            <person name="Nelson K.E."/>
            <person name="Eisen J.A."/>
            <person name="Heidelberg J.F."/>
            <person name="Read T.D."/>
            <person name="Dodson R.J."/>
            <person name="Umayam L.A."/>
            <person name="Brinkac L.M."/>
            <person name="Beanan M.J."/>
            <person name="Daugherty S.C."/>
            <person name="DeBoy R.T."/>
            <person name="Durkin A.S."/>
            <person name="Kolonay J.F."/>
            <person name="Madupu R."/>
            <person name="Nelson W.C."/>
            <person name="Ayodeji B."/>
            <person name="Kraul M."/>
            <person name="Shetty J."/>
            <person name="Malek J.A."/>
            <person name="Van Aken S.E."/>
            <person name="Riedmuller S."/>
            <person name="Tettelin H."/>
            <person name="Gill S.R."/>
            <person name="White O."/>
            <person name="Salzberg S.L."/>
            <person name="Hoover D.L."/>
            <person name="Lindler L.E."/>
            <person name="Halling S.M."/>
            <person name="Boyle S.M."/>
            <person name="Fraser C.M."/>
        </authorList>
    </citation>
    <scope>NUCLEOTIDE SEQUENCE [LARGE SCALE GENOMIC DNA]</scope>
    <source>
        <strain>1330</strain>
    </source>
</reference>
<reference key="2">
    <citation type="journal article" date="2011" name="J. Bacteriol.">
        <title>Revised genome sequence of Brucella suis 1330.</title>
        <authorList>
            <person name="Tae H."/>
            <person name="Shallom S."/>
            <person name="Settlage R."/>
            <person name="Preston D."/>
            <person name="Adams L.G."/>
            <person name="Garner H.R."/>
        </authorList>
    </citation>
    <scope>NUCLEOTIDE SEQUENCE [LARGE SCALE GENOMIC DNA]</scope>
    <source>
        <strain>1330</strain>
    </source>
</reference>
<organism>
    <name type="scientific">Brucella suis biovar 1 (strain 1330)</name>
    <dbReference type="NCBI Taxonomy" id="204722"/>
    <lineage>
        <taxon>Bacteria</taxon>
        <taxon>Pseudomonadati</taxon>
        <taxon>Pseudomonadota</taxon>
        <taxon>Alphaproteobacteria</taxon>
        <taxon>Hyphomicrobiales</taxon>
        <taxon>Brucellaceae</taxon>
        <taxon>Brucella/Ochrobactrum group</taxon>
        <taxon>Brucella</taxon>
    </lineage>
</organism>
<accession>Q8G044</accession>
<accession>G0KAN0</accession>
<keyword id="KW-0067">ATP-binding</keyword>
<keyword id="KW-0133">Cell shape</keyword>
<keyword id="KW-0961">Cell wall biogenesis/degradation</keyword>
<keyword id="KW-0963">Cytoplasm</keyword>
<keyword id="KW-0436">Ligase</keyword>
<keyword id="KW-0460">Magnesium</keyword>
<keyword id="KW-0464">Manganese</keyword>
<keyword id="KW-0479">Metal-binding</keyword>
<keyword id="KW-0547">Nucleotide-binding</keyword>
<keyword id="KW-0573">Peptidoglycan synthesis</keyword>
<comment type="function">
    <text evidence="2">Cell wall formation.</text>
</comment>
<comment type="catalytic activity">
    <reaction evidence="2">
        <text>2 D-alanine + ATP = D-alanyl-D-alanine + ADP + phosphate + H(+)</text>
        <dbReference type="Rhea" id="RHEA:11224"/>
        <dbReference type="ChEBI" id="CHEBI:15378"/>
        <dbReference type="ChEBI" id="CHEBI:30616"/>
        <dbReference type="ChEBI" id="CHEBI:43474"/>
        <dbReference type="ChEBI" id="CHEBI:57416"/>
        <dbReference type="ChEBI" id="CHEBI:57822"/>
        <dbReference type="ChEBI" id="CHEBI:456216"/>
        <dbReference type="EC" id="6.3.2.4"/>
    </reaction>
</comment>
<comment type="cofactor">
    <cofactor evidence="1">
        <name>Mg(2+)</name>
        <dbReference type="ChEBI" id="CHEBI:18420"/>
    </cofactor>
    <cofactor evidence="1">
        <name>Mn(2+)</name>
        <dbReference type="ChEBI" id="CHEBI:29035"/>
    </cofactor>
    <text evidence="1">Binds 2 magnesium or manganese ions per subunit.</text>
</comment>
<comment type="pathway">
    <text evidence="2">Cell wall biogenesis; peptidoglycan biosynthesis.</text>
</comment>
<comment type="subcellular location">
    <subcellularLocation>
        <location evidence="2">Cytoplasm</location>
    </subcellularLocation>
</comment>
<comment type="similarity">
    <text evidence="2">Belongs to the D-alanine--D-alanine ligase family.</text>
</comment>
<evidence type="ECO:0000250" key="1"/>
<evidence type="ECO:0000255" key="2">
    <source>
        <dbReference type="HAMAP-Rule" id="MF_00047"/>
    </source>
</evidence>
<dbReference type="EC" id="6.3.2.4" evidence="2"/>
<dbReference type="EMBL" id="AE014291">
    <property type="protein sequence ID" value="AAN30189.1"/>
    <property type="molecule type" value="Genomic_DNA"/>
</dbReference>
<dbReference type="EMBL" id="CP002997">
    <property type="protein sequence ID" value="AEM18607.1"/>
    <property type="molecule type" value="Genomic_DNA"/>
</dbReference>
<dbReference type="RefSeq" id="WP_004690926.1">
    <property type="nucleotide sequence ID" value="NZ_KN046804.1"/>
</dbReference>
<dbReference type="SMR" id="Q8G044"/>
<dbReference type="KEGG" id="bms:BR1271"/>
<dbReference type="KEGG" id="bsi:BS1330_I1267"/>
<dbReference type="PATRIC" id="fig|204722.22.peg.234"/>
<dbReference type="HOGENOM" id="CLU_039268_0_0_5"/>
<dbReference type="UniPathway" id="UPA00219"/>
<dbReference type="Proteomes" id="UP000007104">
    <property type="component" value="Chromosome I"/>
</dbReference>
<dbReference type="GO" id="GO:0005829">
    <property type="term" value="C:cytosol"/>
    <property type="evidence" value="ECO:0007669"/>
    <property type="project" value="TreeGrafter"/>
</dbReference>
<dbReference type="GO" id="GO:0005524">
    <property type="term" value="F:ATP binding"/>
    <property type="evidence" value="ECO:0007669"/>
    <property type="project" value="UniProtKB-KW"/>
</dbReference>
<dbReference type="GO" id="GO:0008716">
    <property type="term" value="F:D-alanine-D-alanine ligase activity"/>
    <property type="evidence" value="ECO:0007669"/>
    <property type="project" value="UniProtKB-UniRule"/>
</dbReference>
<dbReference type="GO" id="GO:0046872">
    <property type="term" value="F:metal ion binding"/>
    <property type="evidence" value="ECO:0007669"/>
    <property type="project" value="UniProtKB-KW"/>
</dbReference>
<dbReference type="GO" id="GO:0071555">
    <property type="term" value="P:cell wall organization"/>
    <property type="evidence" value="ECO:0007669"/>
    <property type="project" value="UniProtKB-KW"/>
</dbReference>
<dbReference type="GO" id="GO:0009252">
    <property type="term" value="P:peptidoglycan biosynthetic process"/>
    <property type="evidence" value="ECO:0007669"/>
    <property type="project" value="UniProtKB-UniRule"/>
</dbReference>
<dbReference type="GO" id="GO:0008360">
    <property type="term" value="P:regulation of cell shape"/>
    <property type="evidence" value="ECO:0007669"/>
    <property type="project" value="UniProtKB-KW"/>
</dbReference>
<dbReference type="FunFam" id="3.30.470.20:FF:000008">
    <property type="entry name" value="D-alanine--D-alanine ligase"/>
    <property type="match status" value="1"/>
</dbReference>
<dbReference type="Gene3D" id="3.40.50.20">
    <property type="match status" value="1"/>
</dbReference>
<dbReference type="Gene3D" id="3.30.1490.20">
    <property type="entry name" value="ATP-grasp fold, A domain"/>
    <property type="match status" value="1"/>
</dbReference>
<dbReference type="Gene3D" id="3.30.470.20">
    <property type="entry name" value="ATP-grasp fold, B domain"/>
    <property type="match status" value="1"/>
</dbReference>
<dbReference type="HAMAP" id="MF_00047">
    <property type="entry name" value="Dala_Dala_lig"/>
    <property type="match status" value="1"/>
</dbReference>
<dbReference type="InterPro" id="IPR011761">
    <property type="entry name" value="ATP-grasp"/>
</dbReference>
<dbReference type="InterPro" id="IPR013815">
    <property type="entry name" value="ATP_grasp_subdomain_1"/>
</dbReference>
<dbReference type="InterPro" id="IPR000291">
    <property type="entry name" value="D-Ala_lig_Van_CS"/>
</dbReference>
<dbReference type="InterPro" id="IPR005905">
    <property type="entry name" value="D_ala_D_ala"/>
</dbReference>
<dbReference type="InterPro" id="IPR011095">
    <property type="entry name" value="Dala_Dala_lig_C"/>
</dbReference>
<dbReference type="InterPro" id="IPR011127">
    <property type="entry name" value="Dala_Dala_lig_N"/>
</dbReference>
<dbReference type="InterPro" id="IPR016185">
    <property type="entry name" value="PreATP-grasp_dom_sf"/>
</dbReference>
<dbReference type="NCBIfam" id="TIGR01205">
    <property type="entry name" value="D_ala_D_alaTIGR"/>
    <property type="match status" value="1"/>
</dbReference>
<dbReference type="NCBIfam" id="NF002528">
    <property type="entry name" value="PRK01966.1-4"/>
    <property type="match status" value="1"/>
</dbReference>
<dbReference type="PANTHER" id="PTHR23132">
    <property type="entry name" value="D-ALANINE--D-ALANINE LIGASE"/>
    <property type="match status" value="1"/>
</dbReference>
<dbReference type="PANTHER" id="PTHR23132:SF25">
    <property type="entry name" value="D-ALANINE--D-ALANINE LIGASE A"/>
    <property type="match status" value="1"/>
</dbReference>
<dbReference type="Pfam" id="PF07478">
    <property type="entry name" value="Dala_Dala_lig_C"/>
    <property type="match status" value="1"/>
</dbReference>
<dbReference type="Pfam" id="PF01820">
    <property type="entry name" value="Dala_Dala_lig_N"/>
    <property type="match status" value="1"/>
</dbReference>
<dbReference type="PIRSF" id="PIRSF039102">
    <property type="entry name" value="Ddl/VanB"/>
    <property type="match status" value="1"/>
</dbReference>
<dbReference type="SUPFAM" id="SSF56059">
    <property type="entry name" value="Glutathione synthetase ATP-binding domain-like"/>
    <property type="match status" value="1"/>
</dbReference>
<dbReference type="SUPFAM" id="SSF52440">
    <property type="entry name" value="PreATP-grasp domain"/>
    <property type="match status" value="1"/>
</dbReference>
<dbReference type="PROSITE" id="PS50975">
    <property type="entry name" value="ATP_GRASP"/>
    <property type="match status" value="1"/>
</dbReference>
<dbReference type="PROSITE" id="PS00843">
    <property type="entry name" value="DALA_DALA_LIGASE_1"/>
    <property type="match status" value="1"/>
</dbReference>
<dbReference type="PROSITE" id="PS00844">
    <property type="entry name" value="DALA_DALA_LIGASE_2"/>
    <property type="match status" value="1"/>
</dbReference>
<feature type="chain" id="PRO_0000177796" description="D-alanine--D-alanine ligase A">
    <location>
        <begin position="1"/>
        <end position="353"/>
    </location>
</feature>
<feature type="domain" description="ATP-grasp" evidence="2">
    <location>
        <begin position="141"/>
        <end position="346"/>
    </location>
</feature>
<feature type="binding site" evidence="2">
    <location>
        <begin position="169"/>
        <end position="224"/>
    </location>
    <ligand>
        <name>ATP</name>
        <dbReference type="ChEBI" id="CHEBI:30616"/>
    </ligand>
</feature>
<feature type="binding site" evidence="2">
    <location>
        <position position="300"/>
    </location>
    <ligand>
        <name>Mg(2+)</name>
        <dbReference type="ChEBI" id="CHEBI:18420"/>
        <label>1</label>
    </ligand>
</feature>
<feature type="binding site" evidence="2">
    <location>
        <position position="313"/>
    </location>
    <ligand>
        <name>Mg(2+)</name>
        <dbReference type="ChEBI" id="CHEBI:18420"/>
        <label>1</label>
    </ligand>
</feature>
<feature type="binding site" evidence="2">
    <location>
        <position position="313"/>
    </location>
    <ligand>
        <name>Mg(2+)</name>
        <dbReference type="ChEBI" id="CHEBI:18420"/>
        <label>2</label>
    </ligand>
</feature>
<feature type="binding site" evidence="2">
    <location>
        <position position="315"/>
    </location>
    <ligand>
        <name>Mg(2+)</name>
        <dbReference type="ChEBI" id="CHEBI:18420"/>
        <label>2</label>
    </ligand>
</feature>
<name>DDLA_BRUSU</name>
<proteinExistence type="inferred from homology"/>
<gene>
    <name evidence="2" type="primary">ddlA</name>
    <name type="ordered locus">BR1271</name>
    <name type="ordered locus">BS1330_I1267</name>
</gene>
<sequence>MASGKMRIVVLFGGRSAEHDVSVLSATNVMNALDPAKYEAVPVFVTRAGQWLLSRFVNGALEKPSSGAELCLVPGGCGRAIVVPDAGAPYEADKIDIIFPVLHGLHGEDGAVQGLAQVARVPLAGCGIPGSANALDKDIAKRLVNEAGLSTAKSVTITREEVPAFSALEQALGLPIFIKPARQGSSVGVHKVVTEADYQAAMSDGFTYDDKLLAEEFIQAREVECGVLEDEGGALFVSRAGEIVPAESHCFYSYDAKYIDADGTEIKVPAELPEQVENEIRAIATRAFRVLGCDSMARVDFFVTADRRIVLNEINTIPGFTDMSMYSKVMAVSGVSYPEIINRLVAHGLARGS</sequence>